<keyword id="KW-1003">Cell membrane</keyword>
<keyword id="KW-0413">Isomerase</keyword>
<keyword id="KW-0449">Lipoprotein</keyword>
<keyword id="KW-0472">Membrane</keyword>
<keyword id="KW-0564">Palmitate</keyword>
<keyword id="KW-1185">Reference proteome</keyword>
<keyword id="KW-0697">Rotamase</keyword>
<keyword id="KW-0732">Signal</keyword>
<gene>
    <name evidence="1" type="primary">prsA</name>
    <name type="ordered locus">SGO_1572</name>
</gene>
<proteinExistence type="inferred from homology"/>
<evidence type="ECO:0000255" key="1">
    <source>
        <dbReference type="HAMAP-Rule" id="MF_01145"/>
    </source>
</evidence>
<sequence>MKKKIVAGAVTLLSVAVLAACGKTSGSDKDIITMKGDTITVSEFYDKVKSNPSAQQVLLNLTIKEVFEKQYGKKVTDKEVEEAYEKSSKAYGDNFARVLAQAGLTEDAYREQIRTNKLVEYAVKKAAEKELTDENYKAAYEAYTPEVTAQIIKVDSEDKAKEVLAAAKAEGADFAQLAKDNSTDGDTKDKGGEIKFDSAATNVPDAVKKAAFGLEANAVSDLVTVRSNQGQASYYIVKLVSKTEKSSKWEDYKDKLKQVILTAKQNNTSFIQSVVAKELKDANIKVKDAAFQNLFSQYTQTNTSSSSSK</sequence>
<dbReference type="EC" id="5.2.1.8" evidence="1"/>
<dbReference type="EMBL" id="CP000725">
    <property type="protein sequence ID" value="ABV11144.1"/>
    <property type="molecule type" value="Genomic_DNA"/>
</dbReference>
<dbReference type="RefSeq" id="WP_012130637.1">
    <property type="nucleotide sequence ID" value="NC_009785.1"/>
</dbReference>
<dbReference type="SMR" id="A8AYJ0"/>
<dbReference type="STRING" id="467705.SGO_1572"/>
<dbReference type="GeneID" id="93787855"/>
<dbReference type="KEGG" id="sgo:SGO_1572"/>
<dbReference type="eggNOG" id="COG0760">
    <property type="taxonomic scope" value="Bacteria"/>
</dbReference>
<dbReference type="HOGENOM" id="CLU_034646_6_0_9"/>
<dbReference type="Proteomes" id="UP000001131">
    <property type="component" value="Chromosome"/>
</dbReference>
<dbReference type="GO" id="GO:0005886">
    <property type="term" value="C:plasma membrane"/>
    <property type="evidence" value="ECO:0007669"/>
    <property type="project" value="UniProtKB-SubCell"/>
</dbReference>
<dbReference type="GO" id="GO:0003755">
    <property type="term" value="F:peptidyl-prolyl cis-trans isomerase activity"/>
    <property type="evidence" value="ECO:0007669"/>
    <property type="project" value="UniProtKB-UniRule"/>
</dbReference>
<dbReference type="GO" id="GO:0006457">
    <property type="term" value="P:protein folding"/>
    <property type="evidence" value="ECO:0007669"/>
    <property type="project" value="UniProtKB-UniRule"/>
</dbReference>
<dbReference type="Gene3D" id="3.10.50.40">
    <property type="match status" value="1"/>
</dbReference>
<dbReference type="Gene3D" id="1.10.4030.10">
    <property type="entry name" value="Porin chaperone SurA, peptide-binding domain"/>
    <property type="match status" value="1"/>
</dbReference>
<dbReference type="HAMAP" id="MF_01145">
    <property type="entry name" value="Foldase_PrsA"/>
    <property type="match status" value="1"/>
</dbReference>
<dbReference type="InterPro" id="IPR023059">
    <property type="entry name" value="Foldase_PrsA"/>
</dbReference>
<dbReference type="InterPro" id="IPR046357">
    <property type="entry name" value="PPIase_dom_sf"/>
</dbReference>
<dbReference type="InterPro" id="IPR000297">
    <property type="entry name" value="PPIase_PpiC"/>
</dbReference>
<dbReference type="InterPro" id="IPR050245">
    <property type="entry name" value="PrsA_foldase"/>
</dbReference>
<dbReference type="InterPro" id="IPR027304">
    <property type="entry name" value="Trigger_fact/SurA_dom_sf"/>
</dbReference>
<dbReference type="NCBIfam" id="NF002361">
    <property type="entry name" value="PRK01326.1"/>
    <property type="match status" value="1"/>
</dbReference>
<dbReference type="PANTHER" id="PTHR47245:SF1">
    <property type="entry name" value="FOLDASE PROTEIN PRSA"/>
    <property type="match status" value="1"/>
</dbReference>
<dbReference type="PANTHER" id="PTHR47245">
    <property type="entry name" value="PEPTIDYLPROLYL ISOMERASE"/>
    <property type="match status" value="1"/>
</dbReference>
<dbReference type="Pfam" id="PF00639">
    <property type="entry name" value="Rotamase"/>
    <property type="match status" value="1"/>
</dbReference>
<dbReference type="SUPFAM" id="SSF54534">
    <property type="entry name" value="FKBP-like"/>
    <property type="match status" value="1"/>
</dbReference>
<dbReference type="SUPFAM" id="SSF109998">
    <property type="entry name" value="Triger factor/SurA peptide-binding domain-like"/>
    <property type="match status" value="1"/>
</dbReference>
<dbReference type="PROSITE" id="PS50198">
    <property type="entry name" value="PPIC_PPIASE_2"/>
    <property type="match status" value="1"/>
</dbReference>
<dbReference type="PROSITE" id="PS51257">
    <property type="entry name" value="PROKAR_LIPOPROTEIN"/>
    <property type="match status" value="1"/>
</dbReference>
<feature type="signal peptide" evidence="1">
    <location>
        <begin position="1"/>
        <end position="20"/>
    </location>
</feature>
<feature type="chain" id="PRO_1000085062" description="Foldase protein PrsA">
    <location>
        <begin position="21"/>
        <end position="309"/>
    </location>
</feature>
<feature type="domain" description="PpiC" evidence="1">
    <location>
        <begin position="144"/>
        <end position="241"/>
    </location>
</feature>
<feature type="lipid moiety-binding region" description="N-palmitoyl cysteine" evidence="1">
    <location>
        <position position="21"/>
    </location>
</feature>
<feature type="lipid moiety-binding region" description="S-diacylglycerol cysteine" evidence="1">
    <location>
        <position position="21"/>
    </location>
</feature>
<organism>
    <name type="scientific">Streptococcus gordonii (strain Challis / ATCC 35105 / BCRC 15272 / CH1 / DL1 / V288)</name>
    <dbReference type="NCBI Taxonomy" id="467705"/>
    <lineage>
        <taxon>Bacteria</taxon>
        <taxon>Bacillati</taxon>
        <taxon>Bacillota</taxon>
        <taxon>Bacilli</taxon>
        <taxon>Lactobacillales</taxon>
        <taxon>Streptococcaceae</taxon>
        <taxon>Streptococcus</taxon>
    </lineage>
</organism>
<protein>
    <recommendedName>
        <fullName evidence="1">Foldase protein PrsA</fullName>
        <ecNumber evidence="1">5.2.1.8</ecNumber>
    </recommendedName>
</protein>
<reference key="1">
    <citation type="journal article" date="2007" name="J. Bacteriol.">
        <title>Genome-wide transcriptional changes in Streptococcus gordonii in response to competence signaling peptide.</title>
        <authorList>
            <person name="Vickerman M.M."/>
            <person name="Iobst S."/>
            <person name="Jesionowski A.M."/>
            <person name="Gill S.R."/>
        </authorList>
    </citation>
    <scope>NUCLEOTIDE SEQUENCE [LARGE SCALE GENOMIC DNA]</scope>
    <source>
        <strain>Challis / ATCC 35105 / BCRC 15272 / CH1 / DL1 / V288</strain>
    </source>
</reference>
<name>PRSA_STRGC</name>
<accession>A8AYJ0</accession>
<comment type="function">
    <text evidence="1">Plays a major role in protein secretion by helping the post-translocational extracellular folding of several secreted proteins.</text>
</comment>
<comment type="catalytic activity">
    <reaction evidence="1">
        <text>[protein]-peptidylproline (omega=180) = [protein]-peptidylproline (omega=0)</text>
        <dbReference type="Rhea" id="RHEA:16237"/>
        <dbReference type="Rhea" id="RHEA-COMP:10747"/>
        <dbReference type="Rhea" id="RHEA-COMP:10748"/>
        <dbReference type="ChEBI" id="CHEBI:83833"/>
        <dbReference type="ChEBI" id="CHEBI:83834"/>
        <dbReference type="EC" id="5.2.1.8"/>
    </reaction>
</comment>
<comment type="subcellular location">
    <subcellularLocation>
        <location evidence="1">Cell membrane</location>
        <topology evidence="1">Lipid-anchor</topology>
    </subcellularLocation>
</comment>
<comment type="similarity">
    <text evidence="1">Belongs to the PrsA family.</text>
</comment>